<organism>
    <name type="scientific">Halalkalibacterium halodurans (strain ATCC BAA-125 / DSM 18197 / FERM 7344 / JCM 9153 / C-125)</name>
    <name type="common">Bacillus halodurans</name>
    <dbReference type="NCBI Taxonomy" id="272558"/>
    <lineage>
        <taxon>Bacteria</taxon>
        <taxon>Bacillati</taxon>
        <taxon>Bacillota</taxon>
        <taxon>Bacilli</taxon>
        <taxon>Bacillales</taxon>
        <taxon>Bacillaceae</taxon>
        <taxon>Halalkalibacterium (ex Joshi et al. 2022)</taxon>
    </lineage>
</organism>
<name>SECY_HALH5</name>
<feature type="chain" id="PRO_0000131709" description="Protein translocase subunit SecY">
    <location>
        <begin position="1"/>
        <end position="430"/>
    </location>
</feature>
<feature type="transmembrane region" description="Helical" evidence="1">
    <location>
        <begin position="18"/>
        <end position="38"/>
    </location>
</feature>
<feature type="transmembrane region" description="Helical" evidence="1">
    <location>
        <begin position="67"/>
        <end position="87"/>
    </location>
</feature>
<feature type="transmembrane region" description="Helical" evidence="1">
    <location>
        <begin position="118"/>
        <end position="138"/>
    </location>
</feature>
<feature type="transmembrane region" description="Helical" evidence="1">
    <location>
        <begin position="145"/>
        <end position="165"/>
    </location>
</feature>
<feature type="transmembrane region" description="Helical" evidence="1">
    <location>
        <begin position="177"/>
        <end position="197"/>
    </location>
</feature>
<feature type="transmembrane region" description="Helical" evidence="1">
    <location>
        <begin position="213"/>
        <end position="233"/>
    </location>
</feature>
<feature type="transmembrane region" description="Helical" evidence="1">
    <location>
        <begin position="270"/>
        <end position="290"/>
    </location>
</feature>
<feature type="transmembrane region" description="Helical" evidence="1">
    <location>
        <begin position="309"/>
        <end position="329"/>
    </location>
</feature>
<feature type="transmembrane region" description="Helical" evidence="1">
    <location>
        <begin position="369"/>
        <end position="389"/>
    </location>
</feature>
<feature type="transmembrane region" description="Helical" evidence="1">
    <location>
        <begin position="390"/>
        <end position="410"/>
    </location>
</feature>
<feature type="sequence conflict" description="In Ref. 1; BAA01191." evidence="2" ref="1">
    <original>V</original>
    <variation>VV</variation>
    <location>
        <position position="119"/>
    </location>
</feature>
<feature type="sequence conflict" description="In Ref. 1; BAA01191." evidence="2" ref="1">
    <original>F</original>
    <variation>L</variation>
    <location>
        <position position="280"/>
    </location>
</feature>
<feature type="sequence conflict" description="In Ref. 1; BAA01191." evidence="2" ref="1">
    <original>P</original>
    <variation>L</variation>
    <location>
        <position position="309"/>
    </location>
</feature>
<feature type="sequence conflict" description="In Ref. 1; BAA01191." evidence="2" ref="1">
    <original>L</original>
    <variation>R</variation>
    <location>
        <position position="318"/>
    </location>
</feature>
<feature type="sequence conflict" description="In Ref. 1; BAA01191." evidence="2" ref="1">
    <original>T</original>
    <variation>A</variation>
    <location>
        <position position="327"/>
    </location>
</feature>
<feature type="sequence conflict" description="In Ref. 1; BAA01191." evidence="2" ref="1">
    <original>R</original>
    <variation>P</variation>
    <location>
        <position position="362"/>
    </location>
</feature>
<comment type="function">
    <text evidence="1">The central subunit of the protein translocation channel SecYEG. Consists of two halves formed by TMs 1-5 and 6-10. These two domains form a lateral gate at the front which open onto the bilayer between TMs 2 and 7, and are clamped together by SecE at the back. The channel is closed by both a pore ring composed of hydrophobic SecY resides and a short helix (helix 2A) on the extracellular side of the membrane which forms a plug. The plug probably moves laterally to allow the channel to open. The ring and the pore may move independently.</text>
</comment>
<comment type="subunit">
    <text evidence="1">Component of the Sec protein translocase complex. Heterotrimer consisting of SecY, SecE and SecG subunits. The heterotrimers can form oligomers, although 1 heterotrimer is thought to be able to translocate proteins. Interacts with the ribosome. Interacts with SecDF, and other proteins may be involved. Interacts with SecA.</text>
</comment>
<comment type="subcellular location">
    <subcellularLocation>
        <location evidence="1">Cell membrane</location>
        <topology evidence="1">Multi-pass membrane protein</topology>
    </subcellularLocation>
</comment>
<comment type="similarity">
    <text evidence="1">Belongs to the SecY/SEC61-alpha family.</text>
</comment>
<proteinExistence type="inferred from homology"/>
<accession>P38375</accession>
<accession>Q9Z9J5</accession>
<reference key="1">
    <citation type="journal article" date="1992" name="J. Gen. Microbiol.">
        <title>Molecular cloning and characterization of an alkalophilic Bacillus sp. C125 gene homologous to Bacillus subtilis secY.</title>
        <authorList>
            <person name="Kang S.K."/>
            <person name="Kudo T."/>
            <person name="Horikoshi K."/>
        </authorList>
    </citation>
    <scope>NUCLEOTIDE SEQUENCE [GENOMIC DNA]</scope>
    <source>
        <strain>ATCC BAA-125 / DSM 18197 / FERM 7344 / JCM 9153 / C-125</strain>
    </source>
</reference>
<reference key="2">
    <citation type="journal article" date="1999" name="Biosci. Biotechnol. Biochem.">
        <title>Sequence analysis of a 32-kb region including the major ribosomal protein gene clusters from alkaliphilic Bacillus sp. strain C-125.</title>
        <authorList>
            <person name="Takami H."/>
            <person name="Takaki Y."/>
            <person name="Nakasone K."/>
            <person name="Hirama C."/>
            <person name="Inoue A."/>
            <person name="Horikoshi K."/>
        </authorList>
    </citation>
    <scope>NUCLEOTIDE SEQUENCE [GENOMIC DNA]</scope>
    <source>
        <strain>ATCC BAA-125 / DSM 18197 / FERM 7344 / JCM 9153 / C-125</strain>
    </source>
</reference>
<reference key="3">
    <citation type="journal article" date="2000" name="Nucleic Acids Res.">
        <title>Complete genome sequence of the alkaliphilic bacterium Bacillus halodurans and genomic sequence comparison with Bacillus subtilis.</title>
        <authorList>
            <person name="Takami H."/>
            <person name="Nakasone K."/>
            <person name="Takaki Y."/>
            <person name="Maeno G."/>
            <person name="Sasaki R."/>
            <person name="Masui N."/>
            <person name="Fuji F."/>
            <person name="Hirama C."/>
            <person name="Nakamura Y."/>
            <person name="Ogasawara N."/>
            <person name="Kuhara S."/>
            <person name="Horikoshi K."/>
        </authorList>
    </citation>
    <scope>NUCLEOTIDE SEQUENCE [LARGE SCALE GENOMIC DNA]</scope>
    <source>
        <strain>ATCC BAA-125 / DSM 18197 / FERM 7344 / JCM 9153 / C-125</strain>
    </source>
</reference>
<evidence type="ECO:0000255" key="1">
    <source>
        <dbReference type="HAMAP-Rule" id="MF_01465"/>
    </source>
</evidence>
<evidence type="ECO:0000305" key="2"/>
<protein>
    <recommendedName>
        <fullName evidence="1">Protein translocase subunit SecY</fullName>
    </recommendedName>
</protein>
<dbReference type="EMBL" id="D10360">
    <property type="protein sequence ID" value="BAA01191.1"/>
    <property type="molecule type" value="Genomic_DNA"/>
</dbReference>
<dbReference type="EMBL" id="AB017508">
    <property type="protein sequence ID" value="BAA75291.1"/>
    <property type="molecule type" value="Genomic_DNA"/>
</dbReference>
<dbReference type="EMBL" id="BA000004">
    <property type="protein sequence ID" value="BAB03873.1"/>
    <property type="molecule type" value="Genomic_DNA"/>
</dbReference>
<dbReference type="PIR" id="B44859">
    <property type="entry name" value="B44859"/>
</dbReference>
<dbReference type="PIR" id="T44403">
    <property type="entry name" value="T44403"/>
</dbReference>
<dbReference type="RefSeq" id="WP_010896337.1">
    <property type="nucleotide sequence ID" value="NC_002570.2"/>
</dbReference>
<dbReference type="SMR" id="P38375"/>
<dbReference type="STRING" id="272558.gene:10725994"/>
<dbReference type="KEGG" id="bha:BH0154"/>
<dbReference type="eggNOG" id="COG0201">
    <property type="taxonomic scope" value="Bacteria"/>
</dbReference>
<dbReference type="HOGENOM" id="CLU_030313_0_1_9"/>
<dbReference type="OrthoDB" id="9809248at2"/>
<dbReference type="Proteomes" id="UP000001258">
    <property type="component" value="Chromosome"/>
</dbReference>
<dbReference type="GO" id="GO:0005886">
    <property type="term" value="C:plasma membrane"/>
    <property type="evidence" value="ECO:0007669"/>
    <property type="project" value="UniProtKB-SubCell"/>
</dbReference>
<dbReference type="GO" id="GO:0065002">
    <property type="term" value="P:intracellular protein transmembrane transport"/>
    <property type="evidence" value="ECO:0007669"/>
    <property type="project" value="UniProtKB-UniRule"/>
</dbReference>
<dbReference type="GO" id="GO:0006605">
    <property type="term" value="P:protein targeting"/>
    <property type="evidence" value="ECO:0007669"/>
    <property type="project" value="UniProtKB-UniRule"/>
</dbReference>
<dbReference type="GO" id="GO:0043952">
    <property type="term" value="P:protein transport by the Sec complex"/>
    <property type="evidence" value="ECO:0007669"/>
    <property type="project" value="UniProtKB-UniRule"/>
</dbReference>
<dbReference type="FunFam" id="1.10.3370.10:FF:000001">
    <property type="entry name" value="Preprotein translocase subunit SecY"/>
    <property type="match status" value="1"/>
</dbReference>
<dbReference type="Gene3D" id="1.10.3370.10">
    <property type="entry name" value="SecY subunit domain"/>
    <property type="match status" value="1"/>
</dbReference>
<dbReference type="HAMAP" id="MF_01465">
    <property type="entry name" value="SecY"/>
    <property type="match status" value="1"/>
</dbReference>
<dbReference type="InterPro" id="IPR026593">
    <property type="entry name" value="SecY"/>
</dbReference>
<dbReference type="InterPro" id="IPR002208">
    <property type="entry name" value="SecY/SEC61-alpha"/>
</dbReference>
<dbReference type="InterPro" id="IPR030659">
    <property type="entry name" value="SecY_CS"/>
</dbReference>
<dbReference type="InterPro" id="IPR023201">
    <property type="entry name" value="SecY_dom_sf"/>
</dbReference>
<dbReference type="NCBIfam" id="TIGR00967">
    <property type="entry name" value="3a0501s007"/>
    <property type="match status" value="1"/>
</dbReference>
<dbReference type="PANTHER" id="PTHR10906">
    <property type="entry name" value="SECY/SEC61-ALPHA FAMILY MEMBER"/>
    <property type="match status" value="1"/>
</dbReference>
<dbReference type="Pfam" id="PF00344">
    <property type="entry name" value="SecY"/>
    <property type="match status" value="1"/>
</dbReference>
<dbReference type="PIRSF" id="PIRSF004557">
    <property type="entry name" value="SecY"/>
    <property type="match status" value="1"/>
</dbReference>
<dbReference type="PRINTS" id="PR00303">
    <property type="entry name" value="SECYTRNLCASE"/>
</dbReference>
<dbReference type="SUPFAM" id="SSF103491">
    <property type="entry name" value="Preprotein translocase SecY subunit"/>
    <property type="match status" value="1"/>
</dbReference>
<dbReference type="PROSITE" id="PS00755">
    <property type="entry name" value="SECY_1"/>
    <property type="match status" value="1"/>
</dbReference>
<dbReference type="PROSITE" id="PS00756">
    <property type="entry name" value="SECY_2"/>
    <property type="match status" value="1"/>
</dbReference>
<sequence>MFRTISNIFRVGDLRRKVIFTLLMLIVFRIGSFIPVPGTNREVLDFVDQANAFGFLNTFGGGALGNFSIFAMGIMPYITASIVMQLLQMDVVPKFAEWAKEGEAGRRKLAQFTRYGTIVLGFIQALGMSVGFNNFFPGLIPNPSVSVYLFIALVLTAGTAFLMWLGEQITAKGVGNGISIIIFAGIAAGIPNGLNLIYSTRIQDAGEQLFLNIVVILLLALAILAIIVGVIFVQQALRKIPVQYAKRLVGRNPVGGQSTHLPLKVNAAGVIPVIFALSLFIFPPTVAGLFGSDHPVAAWVIETFDYTHPIGMAVYALLIIGFTYFYTFIQVNPERMAENLKKQGGYIPGIRPGKATQTYITRILYRLTFVGSLFLAVVAILPVFFIKFADLPQAIQIGGTGLLIVVGVALDTMKQIEAQLIKRSYKGFIK</sequence>
<gene>
    <name evidence="1" type="primary">secY</name>
    <name type="ordered locus">BH0154</name>
</gene>
<keyword id="KW-1003">Cell membrane</keyword>
<keyword id="KW-0472">Membrane</keyword>
<keyword id="KW-0653">Protein transport</keyword>
<keyword id="KW-1185">Reference proteome</keyword>
<keyword id="KW-0811">Translocation</keyword>
<keyword id="KW-0812">Transmembrane</keyword>
<keyword id="KW-1133">Transmembrane helix</keyword>
<keyword id="KW-0813">Transport</keyword>